<comment type="function">
    <text evidence="1">Plays a major role in protein secretion by helping the post-translocational extracellular folding of several secreted proteins.</text>
</comment>
<comment type="catalytic activity">
    <reaction evidence="1">
        <text>[protein]-peptidylproline (omega=180) = [protein]-peptidylproline (omega=0)</text>
        <dbReference type="Rhea" id="RHEA:16237"/>
        <dbReference type="Rhea" id="RHEA-COMP:10747"/>
        <dbReference type="Rhea" id="RHEA-COMP:10748"/>
        <dbReference type="ChEBI" id="CHEBI:83833"/>
        <dbReference type="ChEBI" id="CHEBI:83834"/>
        <dbReference type="EC" id="5.2.1.8"/>
    </reaction>
</comment>
<comment type="subcellular location">
    <subcellularLocation>
        <location evidence="1">Cell membrane</location>
        <topology evidence="1">Lipid-anchor</topology>
    </subcellularLocation>
</comment>
<comment type="similarity">
    <text evidence="1">Belongs to the PrsA family.</text>
</comment>
<proteinExistence type="inferred from homology"/>
<reference key="1">
    <citation type="journal article" date="2003" name="Mol. Microbiol.">
        <title>Genome-based analysis of virulence genes in a non-biofilm-forming Staphylococcus epidermidis strain (ATCC 12228).</title>
        <authorList>
            <person name="Zhang Y.-Q."/>
            <person name="Ren S.-X."/>
            <person name="Li H.-L."/>
            <person name="Wang Y.-X."/>
            <person name="Fu G."/>
            <person name="Yang J."/>
            <person name="Qin Z.-Q."/>
            <person name="Miao Y.-G."/>
            <person name="Wang W.-Y."/>
            <person name="Chen R.-S."/>
            <person name="Shen Y."/>
            <person name="Chen Z."/>
            <person name="Yuan Z.-H."/>
            <person name="Zhao G.-P."/>
            <person name="Qu D."/>
            <person name="Danchin A."/>
            <person name="Wen Y.-M."/>
        </authorList>
    </citation>
    <scope>NUCLEOTIDE SEQUENCE [LARGE SCALE GENOMIC DNA]</scope>
    <source>
        <strain>ATCC 12228 / FDA PCI 1200</strain>
    </source>
</reference>
<protein>
    <recommendedName>
        <fullName evidence="1">Foldase protein PrsA</fullName>
        <ecNumber evidence="1">5.2.1.8</ecNumber>
    </recommendedName>
</protein>
<gene>
    <name evidence="1" type="primary">prsA</name>
    <name type="ordered locus">SE_1521</name>
</gene>
<keyword id="KW-1003">Cell membrane</keyword>
<keyword id="KW-0413">Isomerase</keyword>
<keyword id="KW-0449">Lipoprotein</keyword>
<keyword id="KW-0472">Membrane</keyword>
<keyword id="KW-0564">Palmitate</keyword>
<keyword id="KW-0697">Rotamase</keyword>
<keyword id="KW-0732">Signal</keyword>
<feature type="signal peptide" evidence="1">
    <location>
        <begin position="1"/>
        <end position="20"/>
    </location>
</feature>
<feature type="chain" id="PRO_0000029323" description="Foldase protein PrsA">
    <location>
        <begin position="21"/>
        <end position="325"/>
    </location>
</feature>
<feature type="domain" description="PpiC" evidence="1">
    <location>
        <begin position="139"/>
        <end position="245"/>
    </location>
</feature>
<feature type="region of interest" description="Disordered" evidence="2">
    <location>
        <begin position="159"/>
        <end position="202"/>
    </location>
</feature>
<feature type="region of interest" description="Disordered" evidence="2">
    <location>
        <begin position="303"/>
        <end position="325"/>
    </location>
</feature>
<feature type="lipid moiety-binding region" description="N-palmitoyl cysteine" evidence="1">
    <location>
        <position position="21"/>
    </location>
</feature>
<feature type="lipid moiety-binding region" description="S-diacylglycerol cysteine" evidence="1">
    <location>
        <position position="21"/>
    </location>
</feature>
<sequence>MKLMNKIIVPVTASALLLGACGSNATESKDNTLISSKAGDVKVADVMKKMGKEQIANTSFSIVLNKVLADKYKDKVDTKDIDKDIKKEEKQYGGKDQFESMLKQQGMSFDDYKEQKKLSAYQKQLLLDKVNVSDKEIKENSKKASHILIKVKSKSSDKEGLSDKKAKEKAEKIQKEVEKNPNKFGEIAKKESMDSSSAKKDGSLGYVIKGQMVDSFEKALFKLKEGEVSKVVKTDYGYHIIKADKETDFNSEKSNIKQKLIEEKVQKKPKLLTDAYKELLKEYKVDYKDRDIKKAIEDSILDPDKIKQQQQQQSQGGSGLTNSGS</sequence>
<accession>Q8CNR4</accession>
<organism>
    <name type="scientific">Staphylococcus epidermidis (strain ATCC 12228 / FDA PCI 1200)</name>
    <dbReference type="NCBI Taxonomy" id="176280"/>
    <lineage>
        <taxon>Bacteria</taxon>
        <taxon>Bacillati</taxon>
        <taxon>Bacillota</taxon>
        <taxon>Bacilli</taxon>
        <taxon>Bacillales</taxon>
        <taxon>Staphylococcaceae</taxon>
        <taxon>Staphylococcus</taxon>
    </lineage>
</organism>
<evidence type="ECO:0000255" key="1">
    <source>
        <dbReference type="HAMAP-Rule" id="MF_01145"/>
    </source>
</evidence>
<evidence type="ECO:0000256" key="2">
    <source>
        <dbReference type="SAM" id="MobiDB-lite"/>
    </source>
</evidence>
<dbReference type="EC" id="5.2.1.8" evidence="1"/>
<dbReference type="EMBL" id="AE015929">
    <property type="protein sequence ID" value="AAO05120.1"/>
    <property type="molecule type" value="Genomic_DNA"/>
</dbReference>
<dbReference type="RefSeq" id="NP_765076.1">
    <property type="nucleotide sequence ID" value="NC_004461.1"/>
</dbReference>
<dbReference type="RefSeq" id="WP_002485186.1">
    <property type="nucleotide sequence ID" value="NC_004461.1"/>
</dbReference>
<dbReference type="SMR" id="Q8CNR4"/>
<dbReference type="KEGG" id="sep:SE_1521"/>
<dbReference type="PATRIC" id="fig|176280.10.peg.1486"/>
<dbReference type="eggNOG" id="COG0760">
    <property type="taxonomic scope" value="Bacteria"/>
</dbReference>
<dbReference type="HOGENOM" id="CLU_034646_6_2_9"/>
<dbReference type="OrthoDB" id="14196at2"/>
<dbReference type="Proteomes" id="UP000001411">
    <property type="component" value="Chromosome"/>
</dbReference>
<dbReference type="GO" id="GO:0005886">
    <property type="term" value="C:plasma membrane"/>
    <property type="evidence" value="ECO:0007669"/>
    <property type="project" value="UniProtKB-SubCell"/>
</dbReference>
<dbReference type="GO" id="GO:0003755">
    <property type="term" value="F:peptidyl-prolyl cis-trans isomerase activity"/>
    <property type="evidence" value="ECO:0007669"/>
    <property type="project" value="UniProtKB-UniRule"/>
</dbReference>
<dbReference type="GO" id="GO:0006457">
    <property type="term" value="P:protein folding"/>
    <property type="evidence" value="ECO:0007669"/>
    <property type="project" value="UniProtKB-UniRule"/>
</dbReference>
<dbReference type="Gene3D" id="3.10.50.40">
    <property type="match status" value="1"/>
</dbReference>
<dbReference type="HAMAP" id="MF_01145">
    <property type="entry name" value="Foldase_PrsA"/>
    <property type="match status" value="1"/>
</dbReference>
<dbReference type="InterPro" id="IPR023059">
    <property type="entry name" value="Foldase_PrsA"/>
</dbReference>
<dbReference type="InterPro" id="IPR046357">
    <property type="entry name" value="PPIase_dom_sf"/>
</dbReference>
<dbReference type="InterPro" id="IPR000297">
    <property type="entry name" value="PPIase_PpiC"/>
</dbReference>
<dbReference type="InterPro" id="IPR050245">
    <property type="entry name" value="PrsA_foldase"/>
</dbReference>
<dbReference type="InterPro" id="IPR027304">
    <property type="entry name" value="Trigger_fact/SurA_dom_sf"/>
</dbReference>
<dbReference type="PANTHER" id="PTHR47245:SF1">
    <property type="entry name" value="FOLDASE PROTEIN PRSA"/>
    <property type="match status" value="1"/>
</dbReference>
<dbReference type="PANTHER" id="PTHR47245">
    <property type="entry name" value="PEPTIDYLPROLYL ISOMERASE"/>
    <property type="match status" value="1"/>
</dbReference>
<dbReference type="Pfam" id="PF00639">
    <property type="entry name" value="Rotamase"/>
    <property type="match status" value="1"/>
</dbReference>
<dbReference type="SUPFAM" id="SSF54534">
    <property type="entry name" value="FKBP-like"/>
    <property type="match status" value="1"/>
</dbReference>
<dbReference type="SUPFAM" id="SSF109998">
    <property type="entry name" value="Triger factor/SurA peptide-binding domain-like"/>
    <property type="match status" value="1"/>
</dbReference>
<dbReference type="PROSITE" id="PS50198">
    <property type="entry name" value="PPIC_PPIASE_2"/>
    <property type="match status" value="1"/>
</dbReference>
<dbReference type="PROSITE" id="PS51257">
    <property type="entry name" value="PROKAR_LIPOPROTEIN"/>
    <property type="match status" value="1"/>
</dbReference>
<name>PRSA_STAES</name>